<comment type="function">
    <text evidence="1">The UvrABC repair system catalyzes the recognition and processing of DNA lesions. UvrC both incises the 5' and 3' sides of the lesion. The N-terminal half is responsible for the 3' incision and the C-terminal half is responsible for the 5' incision.</text>
</comment>
<comment type="subunit">
    <text evidence="1">Interacts with UvrB in an incision complex.</text>
</comment>
<comment type="subcellular location">
    <subcellularLocation>
        <location evidence="1">Cytoplasm</location>
    </subcellularLocation>
</comment>
<comment type="similarity">
    <text evidence="1">Belongs to the UvrC family.</text>
</comment>
<gene>
    <name evidence="1" type="primary">uvrC</name>
    <name type="ordered locus">XOO2170</name>
</gene>
<evidence type="ECO:0000255" key="1">
    <source>
        <dbReference type="HAMAP-Rule" id="MF_00203"/>
    </source>
</evidence>
<name>UVRC_XANOM</name>
<proteinExistence type="inferred from homology"/>
<reference key="1">
    <citation type="journal article" date="2005" name="Jpn. Agric. Res. Q.">
        <title>Genome sequence of Xanthomonas oryzae pv. oryzae suggests contribution of large numbers of effector genes and insertion sequences to its race diversity.</title>
        <authorList>
            <person name="Ochiai H."/>
            <person name="Inoue Y."/>
            <person name="Takeya M."/>
            <person name="Sasaki A."/>
            <person name="Kaku H."/>
        </authorList>
    </citation>
    <scope>NUCLEOTIDE SEQUENCE [LARGE SCALE GENOMIC DNA]</scope>
    <source>
        <strain>MAFF 311018</strain>
    </source>
</reference>
<sequence length="618" mass="67734">MSAGPQSDFDGKAFAAQLSTAPGVYRMYAGDDTLLYVGKAGALRKRVGSYFNGTPKNARLTSMLSQVARMDVTVTRSEAEALLLENQLIKSLSPRYNVSLRDDKSYPYVLLTREHWPRIALHRGPRAVQGRYFGPYTGVTGVRETLSLMHKLFKLRSCEDSVFRNRSRPCLQYQIGRCSGPCVDLVAAPDYAESVRRATMFLEGKSDQLGEEIMQSMQQASEALEFERAARLRDLLSSLRSMQNRQYVDGRAADLDVLACATQSSQACVLLLSFRDGRNLGTRSFFPKTNGEDSADEILGAFVSQYYAEHSPPREILLDREIPETELIEAALSTAAEHKVALKWNVRGERAGYLLLATRNAQLTLVTELTSQSAQHARSEALREMLGLAEPVKRVECFDISHTMGEATVASCVVFDASGPVRGQYRRFNISGITPGDDYAAMRQAIERRFRRAVEENGVLPDVLLIDGGAGQLAQAQAALADLGVENVWLVGVAKGEERRAGHEALIMADGRELRPGAASPALQFIQQVRDEAHRFAITGHRGRRQKARMTSKLEDIPGIGPRRRASLLKHFGGLVGLKAAGEAEIARVEGVNAALAARIYANLHGLALPDAAGESSP</sequence>
<organism>
    <name type="scientific">Xanthomonas oryzae pv. oryzae (strain MAFF 311018)</name>
    <dbReference type="NCBI Taxonomy" id="342109"/>
    <lineage>
        <taxon>Bacteria</taxon>
        <taxon>Pseudomonadati</taxon>
        <taxon>Pseudomonadota</taxon>
        <taxon>Gammaproteobacteria</taxon>
        <taxon>Lysobacterales</taxon>
        <taxon>Lysobacteraceae</taxon>
        <taxon>Xanthomonas</taxon>
    </lineage>
</organism>
<dbReference type="EMBL" id="AP008229">
    <property type="protein sequence ID" value="BAE68925.1"/>
    <property type="molecule type" value="Genomic_DNA"/>
</dbReference>
<dbReference type="RefSeq" id="WP_011258969.1">
    <property type="nucleotide sequence ID" value="NC_007705.1"/>
</dbReference>
<dbReference type="SMR" id="Q2P3F2"/>
<dbReference type="KEGG" id="xom:XOO2170"/>
<dbReference type="HOGENOM" id="CLU_014841_3_0_6"/>
<dbReference type="GO" id="GO:0005737">
    <property type="term" value="C:cytoplasm"/>
    <property type="evidence" value="ECO:0007669"/>
    <property type="project" value="UniProtKB-SubCell"/>
</dbReference>
<dbReference type="GO" id="GO:0009380">
    <property type="term" value="C:excinuclease repair complex"/>
    <property type="evidence" value="ECO:0007669"/>
    <property type="project" value="InterPro"/>
</dbReference>
<dbReference type="GO" id="GO:0003677">
    <property type="term" value="F:DNA binding"/>
    <property type="evidence" value="ECO:0007669"/>
    <property type="project" value="UniProtKB-UniRule"/>
</dbReference>
<dbReference type="GO" id="GO:0009381">
    <property type="term" value="F:excinuclease ABC activity"/>
    <property type="evidence" value="ECO:0007669"/>
    <property type="project" value="UniProtKB-UniRule"/>
</dbReference>
<dbReference type="GO" id="GO:0006289">
    <property type="term" value="P:nucleotide-excision repair"/>
    <property type="evidence" value="ECO:0007669"/>
    <property type="project" value="UniProtKB-UniRule"/>
</dbReference>
<dbReference type="GO" id="GO:0009432">
    <property type="term" value="P:SOS response"/>
    <property type="evidence" value="ECO:0007669"/>
    <property type="project" value="UniProtKB-UniRule"/>
</dbReference>
<dbReference type="CDD" id="cd10434">
    <property type="entry name" value="GIY-YIG_UvrC_Cho"/>
    <property type="match status" value="1"/>
</dbReference>
<dbReference type="FunFam" id="1.10.150.20:FF:000005">
    <property type="entry name" value="UvrABC system protein C"/>
    <property type="match status" value="1"/>
</dbReference>
<dbReference type="FunFam" id="3.30.420.340:FF:000001">
    <property type="entry name" value="UvrABC system protein C"/>
    <property type="match status" value="1"/>
</dbReference>
<dbReference type="FunFam" id="3.40.1440.10:FF:000001">
    <property type="entry name" value="UvrABC system protein C"/>
    <property type="match status" value="1"/>
</dbReference>
<dbReference type="Gene3D" id="1.10.150.20">
    <property type="entry name" value="5' to 3' exonuclease, C-terminal subdomain"/>
    <property type="match status" value="1"/>
</dbReference>
<dbReference type="Gene3D" id="3.40.1440.10">
    <property type="entry name" value="GIY-YIG endonuclease"/>
    <property type="match status" value="1"/>
</dbReference>
<dbReference type="Gene3D" id="4.10.860.10">
    <property type="entry name" value="UVR domain"/>
    <property type="match status" value="1"/>
</dbReference>
<dbReference type="Gene3D" id="3.30.420.340">
    <property type="entry name" value="UvrC, RNAse H endonuclease domain"/>
    <property type="match status" value="1"/>
</dbReference>
<dbReference type="HAMAP" id="MF_00203">
    <property type="entry name" value="UvrC"/>
    <property type="match status" value="1"/>
</dbReference>
<dbReference type="InterPro" id="IPR000305">
    <property type="entry name" value="GIY-YIG_endonuc"/>
</dbReference>
<dbReference type="InterPro" id="IPR035901">
    <property type="entry name" value="GIY-YIG_endonuc_sf"/>
</dbReference>
<dbReference type="InterPro" id="IPR047296">
    <property type="entry name" value="GIY-YIG_UvrC_Cho"/>
</dbReference>
<dbReference type="InterPro" id="IPR003583">
    <property type="entry name" value="Hlx-hairpin-Hlx_DNA-bd_motif"/>
</dbReference>
<dbReference type="InterPro" id="IPR010994">
    <property type="entry name" value="RuvA_2-like"/>
</dbReference>
<dbReference type="InterPro" id="IPR001943">
    <property type="entry name" value="UVR_dom"/>
</dbReference>
<dbReference type="InterPro" id="IPR036876">
    <property type="entry name" value="UVR_dom_sf"/>
</dbReference>
<dbReference type="InterPro" id="IPR050066">
    <property type="entry name" value="UvrABC_protein_C"/>
</dbReference>
<dbReference type="InterPro" id="IPR004791">
    <property type="entry name" value="UvrC"/>
</dbReference>
<dbReference type="InterPro" id="IPR001162">
    <property type="entry name" value="UvrC_RNase_H_dom"/>
</dbReference>
<dbReference type="InterPro" id="IPR038476">
    <property type="entry name" value="UvrC_RNase_H_dom_sf"/>
</dbReference>
<dbReference type="NCBIfam" id="TIGR00194">
    <property type="entry name" value="uvrC"/>
    <property type="match status" value="1"/>
</dbReference>
<dbReference type="PANTHER" id="PTHR30562:SF1">
    <property type="entry name" value="UVRABC SYSTEM PROTEIN C"/>
    <property type="match status" value="1"/>
</dbReference>
<dbReference type="PANTHER" id="PTHR30562">
    <property type="entry name" value="UVRC/OXIDOREDUCTASE"/>
    <property type="match status" value="1"/>
</dbReference>
<dbReference type="Pfam" id="PF01541">
    <property type="entry name" value="GIY-YIG"/>
    <property type="match status" value="1"/>
</dbReference>
<dbReference type="Pfam" id="PF14520">
    <property type="entry name" value="HHH_5"/>
    <property type="match status" value="1"/>
</dbReference>
<dbReference type="Pfam" id="PF02151">
    <property type="entry name" value="UVR"/>
    <property type="match status" value="1"/>
</dbReference>
<dbReference type="Pfam" id="PF22920">
    <property type="entry name" value="UvrC_RNaseH"/>
    <property type="match status" value="1"/>
</dbReference>
<dbReference type="Pfam" id="PF08459">
    <property type="entry name" value="UvrC_RNaseH_dom"/>
    <property type="match status" value="1"/>
</dbReference>
<dbReference type="SMART" id="SM00465">
    <property type="entry name" value="GIYc"/>
    <property type="match status" value="1"/>
</dbReference>
<dbReference type="SMART" id="SM00278">
    <property type="entry name" value="HhH1"/>
    <property type="match status" value="2"/>
</dbReference>
<dbReference type="SUPFAM" id="SSF46600">
    <property type="entry name" value="C-terminal UvrC-binding domain of UvrB"/>
    <property type="match status" value="1"/>
</dbReference>
<dbReference type="SUPFAM" id="SSF82771">
    <property type="entry name" value="GIY-YIG endonuclease"/>
    <property type="match status" value="1"/>
</dbReference>
<dbReference type="SUPFAM" id="SSF47781">
    <property type="entry name" value="RuvA domain 2-like"/>
    <property type="match status" value="1"/>
</dbReference>
<dbReference type="PROSITE" id="PS50164">
    <property type="entry name" value="GIY_YIG"/>
    <property type="match status" value="1"/>
</dbReference>
<dbReference type="PROSITE" id="PS50151">
    <property type="entry name" value="UVR"/>
    <property type="match status" value="1"/>
</dbReference>
<dbReference type="PROSITE" id="PS50165">
    <property type="entry name" value="UVRC"/>
    <property type="match status" value="1"/>
</dbReference>
<accession>Q2P3F2</accession>
<feature type="chain" id="PRO_0000264979" description="UvrABC system protein C">
    <location>
        <begin position="1"/>
        <end position="618"/>
    </location>
</feature>
<feature type="domain" description="GIY-YIG" evidence="1">
    <location>
        <begin position="20"/>
        <end position="98"/>
    </location>
</feature>
<feature type="domain" description="UVR" evidence="1">
    <location>
        <begin position="207"/>
        <end position="242"/>
    </location>
</feature>
<protein>
    <recommendedName>
        <fullName evidence="1">UvrABC system protein C</fullName>
        <shortName evidence="1">Protein UvrC</shortName>
    </recommendedName>
    <alternativeName>
        <fullName evidence="1">Excinuclease ABC subunit C</fullName>
    </alternativeName>
</protein>
<keyword id="KW-0963">Cytoplasm</keyword>
<keyword id="KW-0227">DNA damage</keyword>
<keyword id="KW-0228">DNA excision</keyword>
<keyword id="KW-0234">DNA repair</keyword>
<keyword id="KW-0267">Excision nuclease</keyword>
<keyword id="KW-0742">SOS response</keyword>